<name>RRAAH_HALHL</name>
<proteinExistence type="inferred from homology"/>
<accession>A1WU91</accession>
<dbReference type="EC" id="4.1.3.17"/>
<dbReference type="EC" id="4.1.1.112"/>
<dbReference type="EMBL" id="CP000544">
    <property type="protein sequence ID" value="ABM61253.1"/>
    <property type="molecule type" value="Genomic_DNA"/>
</dbReference>
<dbReference type="RefSeq" id="WP_011813276.1">
    <property type="nucleotide sequence ID" value="NC_008789.1"/>
</dbReference>
<dbReference type="SMR" id="A1WU91"/>
<dbReference type="STRING" id="349124.Hhal_0465"/>
<dbReference type="KEGG" id="hha:Hhal_0465"/>
<dbReference type="eggNOG" id="COG0684">
    <property type="taxonomic scope" value="Bacteria"/>
</dbReference>
<dbReference type="HOGENOM" id="CLU_072626_4_0_6"/>
<dbReference type="OrthoDB" id="943692at2"/>
<dbReference type="Proteomes" id="UP000000647">
    <property type="component" value="Chromosome"/>
</dbReference>
<dbReference type="GO" id="GO:0047443">
    <property type="term" value="F:4-hydroxy-4-methyl-2-oxoglutarate aldolase activity"/>
    <property type="evidence" value="ECO:0007669"/>
    <property type="project" value="UniProtKB-EC"/>
</dbReference>
<dbReference type="GO" id="GO:0046872">
    <property type="term" value="F:metal ion binding"/>
    <property type="evidence" value="ECO:0007669"/>
    <property type="project" value="UniProtKB-KW"/>
</dbReference>
<dbReference type="GO" id="GO:0008948">
    <property type="term" value="F:oxaloacetate decarboxylase activity"/>
    <property type="evidence" value="ECO:0007669"/>
    <property type="project" value="UniProtKB-EC"/>
</dbReference>
<dbReference type="GO" id="GO:0008428">
    <property type="term" value="F:ribonuclease inhibitor activity"/>
    <property type="evidence" value="ECO:0007669"/>
    <property type="project" value="InterPro"/>
</dbReference>
<dbReference type="GO" id="GO:0051252">
    <property type="term" value="P:regulation of RNA metabolic process"/>
    <property type="evidence" value="ECO:0007669"/>
    <property type="project" value="InterPro"/>
</dbReference>
<dbReference type="CDD" id="cd16841">
    <property type="entry name" value="RraA_family"/>
    <property type="match status" value="1"/>
</dbReference>
<dbReference type="Gene3D" id="3.50.30.40">
    <property type="entry name" value="Ribonuclease E inhibitor RraA/RraA-like"/>
    <property type="match status" value="1"/>
</dbReference>
<dbReference type="InterPro" id="IPR010203">
    <property type="entry name" value="RraA"/>
</dbReference>
<dbReference type="InterPro" id="IPR005493">
    <property type="entry name" value="RraA/RraA-like"/>
</dbReference>
<dbReference type="InterPro" id="IPR036704">
    <property type="entry name" value="RraA/RraA-like_sf"/>
</dbReference>
<dbReference type="NCBIfam" id="TIGR01935">
    <property type="entry name" value="NOT-MenG"/>
    <property type="match status" value="1"/>
</dbReference>
<dbReference type="NCBIfam" id="NF006875">
    <property type="entry name" value="PRK09372.1"/>
    <property type="match status" value="1"/>
</dbReference>
<dbReference type="PANTHER" id="PTHR33254">
    <property type="entry name" value="4-HYDROXY-4-METHYL-2-OXOGLUTARATE ALDOLASE 3-RELATED"/>
    <property type="match status" value="1"/>
</dbReference>
<dbReference type="PANTHER" id="PTHR33254:SF4">
    <property type="entry name" value="4-HYDROXY-4-METHYL-2-OXOGLUTARATE ALDOLASE 3-RELATED"/>
    <property type="match status" value="1"/>
</dbReference>
<dbReference type="Pfam" id="PF03737">
    <property type="entry name" value="RraA-like"/>
    <property type="match status" value="1"/>
</dbReference>
<dbReference type="SUPFAM" id="SSF89562">
    <property type="entry name" value="RraA-like"/>
    <property type="match status" value="1"/>
</dbReference>
<protein>
    <recommendedName>
        <fullName>Putative 4-hydroxy-4-methyl-2-oxoglutarate aldolase</fullName>
        <shortName>HMG aldolase</shortName>
        <ecNumber>4.1.3.17</ecNumber>
    </recommendedName>
    <alternativeName>
        <fullName>Oxaloacetate decarboxylase</fullName>
        <shortName>OAA decarboxylase</shortName>
        <ecNumber>4.1.1.112</ecNumber>
    </alternativeName>
    <alternativeName>
        <fullName>Regulator of ribonuclease activity homolog</fullName>
    </alternativeName>
    <alternativeName>
        <fullName>RraA-like protein</fullName>
    </alternativeName>
</protein>
<comment type="function">
    <text evidence="1">Catalyzes the aldol cleavage of 4-hydroxy-4-methyl-2-oxoglutarate (HMG) into 2 molecules of pyruvate. Also contains a secondary oxaloacetate (OAA) decarboxylase activity due to the common pyruvate enolate transition state formed following C-C bond cleavage in the retro-aldol and decarboxylation reactions (By similarity).</text>
</comment>
<comment type="catalytic activity">
    <reaction>
        <text>4-hydroxy-4-methyl-2-oxoglutarate = 2 pyruvate</text>
        <dbReference type="Rhea" id="RHEA:22748"/>
        <dbReference type="ChEBI" id="CHEBI:15361"/>
        <dbReference type="ChEBI" id="CHEBI:58276"/>
        <dbReference type="EC" id="4.1.3.17"/>
    </reaction>
</comment>
<comment type="catalytic activity">
    <reaction>
        <text>oxaloacetate + H(+) = pyruvate + CO2</text>
        <dbReference type="Rhea" id="RHEA:15641"/>
        <dbReference type="ChEBI" id="CHEBI:15361"/>
        <dbReference type="ChEBI" id="CHEBI:15378"/>
        <dbReference type="ChEBI" id="CHEBI:16452"/>
        <dbReference type="ChEBI" id="CHEBI:16526"/>
        <dbReference type="EC" id="4.1.1.112"/>
    </reaction>
</comment>
<comment type="cofactor">
    <cofactor evidence="1">
        <name>a divalent metal cation</name>
        <dbReference type="ChEBI" id="CHEBI:60240"/>
    </cofactor>
    <text evidence="1">Divalent metal cation.</text>
</comment>
<comment type="subunit">
    <text evidence="1">Homotrimer.</text>
</comment>
<comment type="similarity">
    <text evidence="2">Belongs to the class II aldolase/RraA-like family.</text>
</comment>
<evidence type="ECO:0000250" key="1"/>
<evidence type="ECO:0000305" key="2"/>
<keyword id="KW-0456">Lyase</keyword>
<keyword id="KW-0479">Metal-binding</keyword>
<keyword id="KW-1185">Reference proteome</keyword>
<organism>
    <name type="scientific">Halorhodospira halophila (strain DSM 244 / SL1)</name>
    <name type="common">Ectothiorhodospira halophila (strain DSM 244 / SL1)</name>
    <dbReference type="NCBI Taxonomy" id="349124"/>
    <lineage>
        <taxon>Bacteria</taxon>
        <taxon>Pseudomonadati</taxon>
        <taxon>Pseudomonadota</taxon>
        <taxon>Gammaproteobacteria</taxon>
        <taxon>Chromatiales</taxon>
        <taxon>Ectothiorhodospiraceae</taxon>
        <taxon>Halorhodospira</taxon>
    </lineage>
</organism>
<gene>
    <name type="ordered locus">Hhal_0465</name>
</gene>
<reference key="1">
    <citation type="submission" date="2006-12" db="EMBL/GenBank/DDBJ databases">
        <title>Complete sequence of Halorhodospira halophila SL1.</title>
        <authorList>
            <consortium name="US DOE Joint Genome Institute"/>
            <person name="Copeland A."/>
            <person name="Lucas S."/>
            <person name="Lapidus A."/>
            <person name="Barry K."/>
            <person name="Detter J.C."/>
            <person name="Glavina del Rio T."/>
            <person name="Hammon N."/>
            <person name="Israni S."/>
            <person name="Dalin E."/>
            <person name="Tice H."/>
            <person name="Pitluck S."/>
            <person name="Saunders E."/>
            <person name="Brettin T."/>
            <person name="Bruce D."/>
            <person name="Han C."/>
            <person name="Tapia R."/>
            <person name="Schmutz J."/>
            <person name="Larimer F."/>
            <person name="Land M."/>
            <person name="Hauser L."/>
            <person name="Kyrpides N."/>
            <person name="Mikhailova N."/>
            <person name="Hoff W."/>
            <person name="Richardson P."/>
        </authorList>
    </citation>
    <scope>NUCLEOTIDE SEQUENCE [LARGE SCALE GENOMIC DNA]</scope>
    <source>
        <strain>DSM 244 / SL1</strain>
    </source>
</reference>
<feature type="chain" id="PRO_1000013845" description="Putative 4-hydroxy-4-methyl-2-oxoglutarate aldolase">
    <location>
        <begin position="1"/>
        <end position="164"/>
    </location>
</feature>
<feature type="binding site" evidence="1">
    <location>
        <begin position="79"/>
        <end position="82"/>
    </location>
    <ligand>
        <name>substrate</name>
    </ligand>
</feature>
<feature type="binding site" evidence="1">
    <location>
        <position position="101"/>
    </location>
    <ligand>
        <name>substrate</name>
    </ligand>
</feature>
<feature type="binding site" evidence="1">
    <location>
        <position position="102"/>
    </location>
    <ligand>
        <name>a divalent metal cation</name>
        <dbReference type="ChEBI" id="CHEBI:60240"/>
    </ligand>
</feature>
<sequence>MALLTTDLCDAYADEPGAQLRAMNPMLIGYGGRARFGGPVTTLKLFEDNVRVRELLSAPGDGGVLVVDGGGSMRCALLGDRLAELGRENGWSGAIIYGCVRDSAELAQIDFGVQALNTHPLKSQKKGLGERDVSVTFAGVTIQSGDWLYADEDGVVVASRELTL</sequence>